<protein>
    <recommendedName>
        <fullName>Xylose isomerase</fullName>
        <ecNumber>5.3.1.5</ecNumber>
    </recommendedName>
</protein>
<accession>P27157</accession>
<evidence type="ECO:0000250" key="1"/>
<evidence type="ECO:0000305" key="2"/>
<reference key="1">
    <citation type="journal article" date="1991" name="Mol. Gen. Genet.">
        <title>Organization, promoter analysis and transcriptional regulation of the Staphylococcus xylosus xylose utilization operon.</title>
        <authorList>
            <person name="Sizemore C."/>
            <person name="Buchner E."/>
            <person name="Rygus T."/>
            <person name="Witke C."/>
            <person name="Goetz F."/>
            <person name="Hillen W."/>
        </authorList>
    </citation>
    <scope>NUCLEOTIDE SEQUENCE [GENOMIC DNA]</scope>
    <source>
        <strain>DSM 20267 / Isolate C2A</strain>
    </source>
</reference>
<gene>
    <name type="primary">xylA</name>
</gene>
<keyword id="KW-0119">Carbohydrate metabolism</keyword>
<keyword id="KW-0963">Cytoplasm</keyword>
<keyword id="KW-0413">Isomerase</keyword>
<keyword id="KW-0460">Magnesium</keyword>
<keyword id="KW-0479">Metal-binding</keyword>
<keyword id="KW-0859">Xylose metabolism</keyword>
<sequence length="439" mass="50140">MSYFDINKVNYEGPKSNNAFSFKYYNPEEKLGNHSMSELLRFSVAYWHTFTADLSDPFGVGVAERDWDSLDEMEKAKARVEAIFEFMEKTRIDYFCFHDVDISPEGASLKESNENLDIIVELIKEKMDQTGKKLLWNTTNNFTHERFVHGAATSSNAEVFAYAAAKVKKSLEIAKKLGSENFVFWGGREGYESLLNTNMKLELDNLATFFKMAKSYADEIGYTGQFLIEPKPKEPTTHQYDTDVATAHAFLQKYDLDKDFKFNIEANHATLAGHTFQHELRYARDNNMLGSVDANQGHPLLGWDTDESTDVYDTTLAMYEILKNGGLAPGGLNFDAKPRRTSFKQEDLILTHIAGMDTFALGLRVAYKMIEDNFFENIMDEKYKSFNEGIGKKIVEGETSLKELEDYAFNINTINNTSDHLEVIKSQINQYILNINNKD</sequence>
<comment type="function">
    <text>Involved in D-xylose catabolism.</text>
</comment>
<comment type="catalytic activity">
    <reaction>
        <text>alpha-D-xylose = alpha-D-xylulofuranose</text>
        <dbReference type="Rhea" id="RHEA:22816"/>
        <dbReference type="ChEBI" id="CHEBI:28518"/>
        <dbReference type="ChEBI" id="CHEBI:188998"/>
        <dbReference type="EC" id="5.3.1.5"/>
    </reaction>
</comment>
<comment type="cofactor">
    <cofactor evidence="1">
        <name>Mg(2+)</name>
        <dbReference type="ChEBI" id="CHEBI:18420"/>
    </cofactor>
    <text evidence="1">Binds 2 magnesium ions per subunit.</text>
</comment>
<comment type="subunit">
    <text evidence="1">Homotetramer.</text>
</comment>
<comment type="subcellular location">
    <subcellularLocation>
        <location evidence="1">Cytoplasm</location>
    </subcellularLocation>
</comment>
<comment type="similarity">
    <text evidence="2">Belongs to the xylose isomerase family.</text>
</comment>
<name>XYLA_STAXY</name>
<proteinExistence type="inferred from homology"/>
<organism>
    <name type="scientific">Staphylococcus xylosus</name>
    <dbReference type="NCBI Taxonomy" id="1288"/>
    <lineage>
        <taxon>Bacteria</taxon>
        <taxon>Bacillati</taxon>
        <taxon>Bacillota</taxon>
        <taxon>Bacilli</taxon>
        <taxon>Bacillales</taxon>
        <taxon>Staphylococcaceae</taxon>
        <taxon>Staphylococcus</taxon>
    </lineage>
</organism>
<dbReference type="EC" id="5.3.1.5"/>
<dbReference type="EMBL" id="X57599">
    <property type="protein sequence ID" value="CAA40824.1"/>
    <property type="molecule type" value="Genomic_DNA"/>
</dbReference>
<dbReference type="PIR" id="S16530">
    <property type="entry name" value="S16530"/>
</dbReference>
<dbReference type="SMR" id="P27157"/>
<dbReference type="STRING" id="1288.AWC37_11470"/>
<dbReference type="eggNOG" id="COG2115">
    <property type="taxonomic scope" value="Bacteria"/>
</dbReference>
<dbReference type="GO" id="GO:0005737">
    <property type="term" value="C:cytoplasm"/>
    <property type="evidence" value="ECO:0007669"/>
    <property type="project" value="UniProtKB-SubCell"/>
</dbReference>
<dbReference type="GO" id="GO:0000287">
    <property type="term" value="F:magnesium ion binding"/>
    <property type="evidence" value="ECO:0007669"/>
    <property type="project" value="UniProtKB-UniRule"/>
</dbReference>
<dbReference type="GO" id="GO:0009045">
    <property type="term" value="F:xylose isomerase activity"/>
    <property type="evidence" value="ECO:0007669"/>
    <property type="project" value="UniProtKB-UniRule"/>
</dbReference>
<dbReference type="GO" id="GO:0042732">
    <property type="term" value="P:D-xylose metabolic process"/>
    <property type="evidence" value="ECO:0007669"/>
    <property type="project" value="UniProtKB-UniRule"/>
</dbReference>
<dbReference type="Gene3D" id="3.20.20.150">
    <property type="entry name" value="Divalent-metal-dependent TIM barrel enzymes"/>
    <property type="match status" value="1"/>
</dbReference>
<dbReference type="HAMAP" id="MF_00455">
    <property type="entry name" value="Xylose_isom_A"/>
    <property type="match status" value="1"/>
</dbReference>
<dbReference type="InterPro" id="IPR036237">
    <property type="entry name" value="Xyl_isomerase-like_sf"/>
</dbReference>
<dbReference type="InterPro" id="IPR013022">
    <property type="entry name" value="Xyl_isomerase-like_TIM-brl"/>
</dbReference>
<dbReference type="InterPro" id="IPR013452">
    <property type="entry name" value="Xylose_isom_bac"/>
</dbReference>
<dbReference type="InterPro" id="IPR001998">
    <property type="entry name" value="Xylose_isomerase"/>
</dbReference>
<dbReference type="NCBIfam" id="NF003998">
    <property type="entry name" value="PRK05474.1"/>
    <property type="match status" value="1"/>
</dbReference>
<dbReference type="NCBIfam" id="TIGR02630">
    <property type="entry name" value="xylose_isom_A"/>
    <property type="match status" value="1"/>
</dbReference>
<dbReference type="PANTHER" id="PTHR48408">
    <property type="match status" value="1"/>
</dbReference>
<dbReference type="PANTHER" id="PTHR48408:SF1">
    <property type="entry name" value="XYLOSE ISOMERASE"/>
    <property type="match status" value="1"/>
</dbReference>
<dbReference type="Pfam" id="PF01261">
    <property type="entry name" value="AP_endonuc_2"/>
    <property type="match status" value="1"/>
</dbReference>
<dbReference type="PRINTS" id="PR00688">
    <property type="entry name" value="XYLOSISMRASE"/>
</dbReference>
<dbReference type="SUPFAM" id="SSF51658">
    <property type="entry name" value="Xylose isomerase-like"/>
    <property type="match status" value="1"/>
</dbReference>
<dbReference type="PROSITE" id="PS51415">
    <property type="entry name" value="XYLOSE_ISOMERASE"/>
    <property type="match status" value="1"/>
</dbReference>
<feature type="chain" id="PRO_0000195794" description="Xylose isomerase">
    <location>
        <begin position="1"/>
        <end position="439"/>
    </location>
</feature>
<feature type="active site" evidence="1">
    <location>
        <position position="98"/>
    </location>
</feature>
<feature type="active site" evidence="1">
    <location>
        <position position="101"/>
    </location>
</feature>
<feature type="binding site" evidence="1">
    <location>
        <position position="229"/>
    </location>
    <ligand>
        <name>Mg(2+)</name>
        <dbReference type="ChEBI" id="CHEBI:18420"/>
        <label>1</label>
    </ligand>
</feature>
<feature type="binding site" evidence="1">
    <location>
        <position position="265"/>
    </location>
    <ligand>
        <name>Mg(2+)</name>
        <dbReference type="ChEBI" id="CHEBI:18420"/>
        <label>1</label>
    </ligand>
</feature>
<feature type="binding site" evidence="1">
    <location>
        <position position="265"/>
    </location>
    <ligand>
        <name>Mg(2+)</name>
        <dbReference type="ChEBI" id="CHEBI:18420"/>
        <label>2</label>
    </ligand>
</feature>
<feature type="binding site" evidence="1">
    <location>
        <position position="268"/>
    </location>
    <ligand>
        <name>Mg(2+)</name>
        <dbReference type="ChEBI" id="CHEBI:18420"/>
        <label>2</label>
    </ligand>
</feature>
<feature type="binding site" evidence="1">
    <location>
        <position position="293"/>
    </location>
    <ligand>
        <name>Mg(2+)</name>
        <dbReference type="ChEBI" id="CHEBI:18420"/>
        <label>1</label>
    </ligand>
</feature>
<feature type="binding site" evidence="1">
    <location>
        <position position="304"/>
    </location>
    <ligand>
        <name>Mg(2+)</name>
        <dbReference type="ChEBI" id="CHEBI:18420"/>
        <label>2</label>
    </ligand>
</feature>
<feature type="binding site" evidence="1">
    <location>
        <position position="306"/>
    </location>
    <ligand>
        <name>Mg(2+)</name>
        <dbReference type="ChEBI" id="CHEBI:18420"/>
        <label>2</label>
    </ligand>
</feature>
<feature type="binding site" evidence="1">
    <location>
        <position position="335"/>
    </location>
    <ligand>
        <name>Mg(2+)</name>
        <dbReference type="ChEBI" id="CHEBI:18420"/>
        <label>1</label>
    </ligand>
</feature>